<reference key="1">
    <citation type="submission" date="2007-03" db="EMBL/GenBank/DDBJ databases">
        <title>Complete sequence of Shewanella loihica PV-4.</title>
        <authorList>
            <consortium name="US DOE Joint Genome Institute"/>
            <person name="Copeland A."/>
            <person name="Lucas S."/>
            <person name="Lapidus A."/>
            <person name="Barry K."/>
            <person name="Detter J.C."/>
            <person name="Glavina del Rio T."/>
            <person name="Hammon N."/>
            <person name="Israni S."/>
            <person name="Dalin E."/>
            <person name="Tice H."/>
            <person name="Pitluck S."/>
            <person name="Chain P."/>
            <person name="Malfatti S."/>
            <person name="Shin M."/>
            <person name="Vergez L."/>
            <person name="Schmutz J."/>
            <person name="Larimer F."/>
            <person name="Land M."/>
            <person name="Hauser L."/>
            <person name="Kyrpides N."/>
            <person name="Mikhailova N."/>
            <person name="Romine M.F."/>
            <person name="Serres G."/>
            <person name="Fredrickson J."/>
            <person name="Tiedje J."/>
            <person name="Richardson P."/>
        </authorList>
    </citation>
    <scope>NUCLEOTIDE SEQUENCE [LARGE SCALE GENOMIC DNA]</scope>
    <source>
        <strain>ATCC BAA-1088 / PV-4</strain>
    </source>
</reference>
<proteinExistence type="inferred from homology"/>
<comment type="function">
    <text evidence="1">Catalyzes the final step of fatty acid oxidation in which acetyl-CoA is released and the CoA ester of a fatty acid two carbons shorter is formed.</text>
</comment>
<comment type="catalytic activity">
    <reaction evidence="1">
        <text>an acyl-CoA + acetyl-CoA = a 3-oxoacyl-CoA + CoA</text>
        <dbReference type="Rhea" id="RHEA:21564"/>
        <dbReference type="ChEBI" id="CHEBI:57287"/>
        <dbReference type="ChEBI" id="CHEBI:57288"/>
        <dbReference type="ChEBI" id="CHEBI:58342"/>
        <dbReference type="ChEBI" id="CHEBI:90726"/>
        <dbReference type="EC" id="2.3.1.16"/>
    </reaction>
</comment>
<comment type="pathway">
    <text evidence="1">Lipid metabolism; fatty acid beta-oxidation.</text>
</comment>
<comment type="subunit">
    <text evidence="1">Heterotetramer of two alpha chains (FadJ) and two beta chains (FadI).</text>
</comment>
<comment type="subcellular location">
    <subcellularLocation>
        <location evidence="1">Cytoplasm</location>
    </subcellularLocation>
</comment>
<comment type="similarity">
    <text evidence="1">Belongs to the thiolase-like superfamily. Thiolase family.</text>
</comment>
<sequence>MSELQQVRNAKGDRIAIVMGLRTPFAKQATAFHGVSALDMGKMVVNELLSRSELDPKEIEQLVYGQVVQMPAAPNIAREIVLGTGMNVSTDAYSVTRACATSFQSTVNVAESIMTGNIEIGIAGGADSSSVLPIGVSKKLAHALVDLNKARSFGQKWAIIRRLGLKDLLPVPPAVAEYSTGLSMGQTAEQMAKTYNISRADQDALAHRSHTLATETWDSGHLRDEVMVAHVPPYKSFIDRDNNIRENSSLDSYAKLRPAFDRKHGSVTAANSTPLTDGASAVLLMSESRAKALGYEPIGYIKSYAFSAIDVWQDMLMGPSYATPLALKRAGMELEDLTLIEMHEAFAAQTLANMQMFASKKFAKEKLGRDRAIGEIDMTKFNVLGGSLAYGHPFAATGTRLITQVCRELKRRGGGTGLATACAAGGLGAAMIVEVE</sequence>
<evidence type="ECO:0000255" key="1">
    <source>
        <dbReference type="HAMAP-Rule" id="MF_01618"/>
    </source>
</evidence>
<keyword id="KW-0012">Acyltransferase</keyword>
<keyword id="KW-0963">Cytoplasm</keyword>
<keyword id="KW-0276">Fatty acid metabolism</keyword>
<keyword id="KW-0442">Lipid degradation</keyword>
<keyword id="KW-0443">Lipid metabolism</keyword>
<keyword id="KW-1185">Reference proteome</keyword>
<keyword id="KW-0808">Transferase</keyword>
<name>FADI_SHELP</name>
<organism>
    <name type="scientific">Shewanella loihica (strain ATCC BAA-1088 / PV-4)</name>
    <dbReference type="NCBI Taxonomy" id="323850"/>
    <lineage>
        <taxon>Bacteria</taxon>
        <taxon>Pseudomonadati</taxon>
        <taxon>Pseudomonadota</taxon>
        <taxon>Gammaproteobacteria</taxon>
        <taxon>Alteromonadales</taxon>
        <taxon>Shewanellaceae</taxon>
        <taxon>Shewanella</taxon>
    </lineage>
</organism>
<accession>A3QFP4</accession>
<gene>
    <name evidence="1" type="primary">fadI</name>
    <name type="ordered locus">Shew_2426</name>
</gene>
<protein>
    <recommendedName>
        <fullName evidence="1">3-ketoacyl-CoA thiolase</fullName>
        <ecNumber evidence="1">2.3.1.16</ecNumber>
    </recommendedName>
    <alternativeName>
        <fullName evidence="1">ACSs</fullName>
    </alternativeName>
    <alternativeName>
        <fullName evidence="1">Acetyl-CoA acyltransferase</fullName>
    </alternativeName>
    <alternativeName>
        <fullName evidence="1">Acyl-CoA ligase</fullName>
    </alternativeName>
    <alternativeName>
        <fullName evidence="1">Beta-ketothiolase</fullName>
    </alternativeName>
    <alternativeName>
        <fullName evidence="1">Fatty acid oxidation complex subunit beta</fullName>
    </alternativeName>
</protein>
<feature type="chain" id="PRO_1000069511" description="3-ketoacyl-CoA thiolase">
    <location>
        <begin position="1"/>
        <end position="436"/>
    </location>
</feature>
<feature type="active site" description="Acyl-thioester intermediate" evidence="1">
    <location>
        <position position="99"/>
    </location>
</feature>
<feature type="active site" description="Proton acceptor" evidence="1">
    <location>
        <position position="392"/>
    </location>
</feature>
<feature type="active site" description="Proton acceptor" evidence="1">
    <location>
        <position position="422"/>
    </location>
</feature>
<dbReference type="EC" id="2.3.1.16" evidence="1"/>
<dbReference type="EMBL" id="CP000606">
    <property type="protein sequence ID" value="ABO24292.1"/>
    <property type="molecule type" value="Genomic_DNA"/>
</dbReference>
<dbReference type="RefSeq" id="WP_011866223.1">
    <property type="nucleotide sequence ID" value="NC_009092.1"/>
</dbReference>
<dbReference type="SMR" id="A3QFP4"/>
<dbReference type="STRING" id="323850.Shew_2426"/>
<dbReference type="KEGG" id="slo:Shew_2426"/>
<dbReference type="eggNOG" id="COG0183">
    <property type="taxonomic scope" value="Bacteria"/>
</dbReference>
<dbReference type="HOGENOM" id="CLU_031026_2_0_6"/>
<dbReference type="OrthoDB" id="1402717at2"/>
<dbReference type="UniPathway" id="UPA00659"/>
<dbReference type="Proteomes" id="UP000001558">
    <property type="component" value="Chromosome"/>
</dbReference>
<dbReference type="GO" id="GO:0005829">
    <property type="term" value="C:cytosol"/>
    <property type="evidence" value="ECO:0007669"/>
    <property type="project" value="TreeGrafter"/>
</dbReference>
<dbReference type="GO" id="GO:0003988">
    <property type="term" value="F:acetyl-CoA C-acyltransferase activity"/>
    <property type="evidence" value="ECO:0007669"/>
    <property type="project" value="UniProtKB-UniRule"/>
</dbReference>
<dbReference type="GO" id="GO:0006635">
    <property type="term" value="P:fatty acid beta-oxidation"/>
    <property type="evidence" value="ECO:0007669"/>
    <property type="project" value="UniProtKB-UniRule"/>
</dbReference>
<dbReference type="CDD" id="cd00751">
    <property type="entry name" value="thiolase"/>
    <property type="match status" value="1"/>
</dbReference>
<dbReference type="FunFam" id="3.40.47.10:FF:000011">
    <property type="entry name" value="3-ketoacyl-CoA thiolase"/>
    <property type="match status" value="1"/>
</dbReference>
<dbReference type="Gene3D" id="3.40.47.10">
    <property type="match status" value="1"/>
</dbReference>
<dbReference type="HAMAP" id="MF_01618">
    <property type="entry name" value="FadI"/>
    <property type="match status" value="1"/>
</dbReference>
<dbReference type="InterPro" id="IPR012806">
    <property type="entry name" value="Ac-CoA_C-AcTrfase_FadI"/>
</dbReference>
<dbReference type="InterPro" id="IPR002155">
    <property type="entry name" value="Thiolase"/>
</dbReference>
<dbReference type="InterPro" id="IPR016039">
    <property type="entry name" value="Thiolase-like"/>
</dbReference>
<dbReference type="InterPro" id="IPR020610">
    <property type="entry name" value="Thiolase_AS"/>
</dbReference>
<dbReference type="InterPro" id="IPR020617">
    <property type="entry name" value="Thiolase_C"/>
</dbReference>
<dbReference type="InterPro" id="IPR020613">
    <property type="entry name" value="Thiolase_CS"/>
</dbReference>
<dbReference type="InterPro" id="IPR020616">
    <property type="entry name" value="Thiolase_N"/>
</dbReference>
<dbReference type="NCBIfam" id="TIGR01930">
    <property type="entry name" value="AcCoA-C-Actrans"/>
    <property type="match status" value="1"/>
</dbReference>
<dbReference type="NCBIfam" id="TIGR02446">
    <property type="entry name" value="FadI"/>
    <property type="match status" value="1"/>
</dbReference>
<dbReference type="NCBIfam" id="NF006516">
    <property type="entry name" value="PRK08963.1"/>
    <property type="match status" value="1"/>
</dbReference>
<dbReference type="PANTHER" id="PTHR18919:SF107">
    <property type="entry name" value="ACETYL-COA ACETYLTRANSFERASE, CYTOSOLIC"/>
    <property type="match status" value="1"/>
</dbReference>
<dbReference type="PANTHER" id="PTHR18919">
    <property type="entry name" value="ACETYL-COA C-ACYLTRANSFERASE"/>
    <property type="match status" value="1"/>
</dbReference>
<dbReference type="Pfam" id="PF02803">
    <property type="entry name" value="Thiolase_C"/>
    <property type="match status" value="1"/>
</dbReference>
<dbReference type="Pfam" id="PF00108">
    <property type="entry name" value="Thiolase_N"/>
    <property type="match status" value="1"/>
</dbReference>
<dbReference type="PIRSF" id="PIRSF000429">
    <property type="entry name" value="Ac-CoA_Ac_transf"/>
    <property type="match status" value="1"/>
</dbReference>
<dbReference type="SUPFAM" id="SSF53901">
    <property type="entry name" value="Thiolase-like"/>
    <property type="match status" value="2"/>
</dbReference>
<dbReference type="PROSITE" id="PS00737">
    <property type="entry name" value="THIOLASE_2"/>
    <property type="match status" value="1"/>
</dbReference>
<dbReference type="PROSITE" id="PS00099">
    <property type="entry name" value="THIOLASE_3"/>
    <property type="match status" value="1"/>
</dbReference>